<organism>
    <name type="scientific">Danio rerio</name>
    <name type="common">Zebrafish</name>
    <name type="synonym">Brachydanio rerio</name>
    <dbReference type="NCBI Taxonomy" id="7955"/>
    <lineage>
        <taxon>Eukaryota</taxon>
        <taxon>Metazoa</taxon>
        <taxon>Chordata</taxon>
        <taxon>Craniata</taxon>
        <taxon>Vertebrata</taxon>
        <taxon>Euteleostomi</taxon>
        <taxon>Actinopterygii</taxon>
        <taxon>Neopterygii</taxon>
        <taxon>Teleostei</taxon>
        <taxon>Ostariophysi</taxon>
        <taxon>Cypriniformes</taxon>
        <taxon>Danionidae</taxon>
        <taxon>Danioninae</taxon>
        <taxon>Danio</taxon>
    </lineage>
</organism>
<comment type="function">
    <text evidence="1">Required for nuclear and mitochondrial iron-sulfur protein biosynthesis.</text>
</comment>
<comment type="pathway">
    <text>Cofactor biosynthesis; iron-sulfur cluster biosynthesis.</text>
</comment>
<comment type="subcellular location">
    <subcellularLocation>
        <location evidence="1">Mitochondrion</location>
    </subcellularLocation>
    <subcellularLocation>
        <location evidence="1">Nucleus</location>
    </subcellularLocation>
</comment>
<comment type="similarity">
    <text evidence="2">Belongs to the complex I LYR family.</text>
</comment>
<reference key="1">
    <citation type="journal article" date="2013" name="Nature">
        <title>The zebrafish reference genome sequence and its relationship to the human genome.</title>
        <authorList>
            <person name="Howe K."/>
            <person name="Clark M.D."/>
            <person name="Torroja C.F."/>
            <person name="Torrance J."/>
            <person name="Berthelot C."/>
            <person name="Muffato M."/>
            <person name="Collins J.E."/>
            <person name="Humphray S."/>
            <person name="McLaren K."/>
            <person name="Matthews L."/>
            <person name="McLaren S."/>
            <person name="Sealy I."/>
            <person name="Caccamo M."/>
            <person name="Churcher C."/>
            <person name="Scott C."/>
            <person name="Barrett J.C."/>
            <person name="Koch R."/>
            <person name="Rauch G.J."/>
            <person name="White S."/>
            <person name="Chow W."/>
            <person name="Kilian B."/>
            <person name="Quintais L.T."/>
            <person name="Guerra-Assuncao J.A."/>
            <person name="Zhou Y."/>
            <person name="Gu Y."/>
            <person name="Yen J."/>
            <person name="Vogel J.H."/>
            <person name="Eyre T."/>
            <person name="Redmond S."/>
            <person name="Banerjee R."/>
            <person name="Chi J."/>
            <person name="Fu B."/>
            <person name="Langley E."/>
            <person name="Maguire S.F."/>
            <person name="Laird G.K."/>
            <person name="Lloyd D."/>
            <person name="Kenyon E."/>
            <person name="Donaldson S."/>
            <person name="Sehra H."/>
            <person name="Almeida-King J."/>
            <person name="Loveland J."/>
            <person name="Trevanion S."/>
            <person name="Jones M."/>
            <person name="Quail M."/>
            <person name="Willey D."/>
            <person name="Hunt A."/>
            <person name="Burton J."/>
            <person name="Sims S."/>
            <person name="McLay K."/>
            <person name="Plumb B."/>
            <person name="Davis J."/>
            <person name="Clee C."/>
            <person name="Oliver K."/>
            <person name="Clark R."/>
            <person name="Riddle C."/>
            <person name="Elliot D."/>
            <person name="Threadgold G."/>
            <person name="Harden G."/>
            <person name="Ware D."/>
            <person name="Begum S."/>
            <person name="Mortimore B."/>
            <person name="Kerry G."/>
            <person name="Heath P."/>
            <person name="Phillimore B."/>
            <person name="Tracey A."/>
            <person name="Corby N."/>
            <person name="Dunn M."/>
            <person name="Johnson C."/>
            <person name="Wood J."/>
            <person name="Clark S."/>
            <person name="Pelan S."/>
            <person name="Griffiths G."/>
            <person name="Smith M."/>
            <person name="Glithero R."/>
            <person name="Howden P."/>
            <person name="Barker N."/>
            <person name="Lloyd C."/>
            <person name="Stevens C."/>
            <person name="Harley J."/>
            <person name="Holt K."/>
            <person name="Panagiotidis G."/>
            <person name="Lovell J."/>
            <person name="Beasley H."/>
            <person name="Henderson C."/>
            <person name="Gordon D."/>
            <person name="Auger K."/>
            <person name="Wright D."/>
            <person name="Collins J."/>
            <person name="Raisen C."/>
            <person name="Dyer L."/>
            <person name="Leung K."/>
            <person name="Robertson L."/>
            <person name="Ambridge K."/>
            <person name="Leongamornlert D."/>
            <person name="McGuire S."/>
            <person name="Gilderthorp R."/>
            <person name="Griffiths C."/>
            <person name="Manthravadi D."/>
            <person name="Nichol S."/>
            <person name="Barker G."/>
            <person name="Whitehead S."/>
            <person name="Kay M."/>
            <person name="Brown J."/>
            <person name="Murnane C."/>
            <person name="Gray E."/>
            <person name="Humphries M."/>
            <person name="Sycamore N."/>
            <person name="Barker D."/>
            <person name="Saunders D."/>
            <person name="Wallis J."/>
            <person name="Babbage A."/>
            <person name="Hammond S."/>
            <person name="Mashreghi-Mohammadi M."/>
            <person name="Barr L."/>
            <person name="Martin S."/>
            <person name="Wray P."/>
            <person name="Ellington A."/>
            <person name="Matthews N."/>
            <person name="Ellwood M."/>
            <person name="Woodmansey R."/>
            <person name="Clark G."/>
            <person name="Cooper J."/>
            <person name="Tromans A."/>
            <person name="Grafham D."/>
            <person name="Skuce C."/>
            <person name="Pandian R."/>
            <person name="Andrews R."/>
            <person name="Harrison E."/>
            <person name="Kimberley A."/>
            <person name="Garnett J."/>
            <person name="Fosker N."/>
            <person name="Hall R."/>
            <person name="Garner P."/>
            <person name="Kelly D."/>
            <person name="Bird C."/>
            <person name="Palmer S."/>
            <person name="Gehring I."/>
            <person name="Berger A."/>
            <person name="Dooley C.M."/>
            <person name="Ersan-Urun Z."/>
            <person name="Eser C."/>
            <person name="Geiger H."/>
            <person name="Geisler M."/>
            <person name="Karotki L."/>
            <person name="Kirn A."/>
            <person name="Konantz J."/>
            <person name="Konantz M."/>
            <person name="Oberlander M."/>
            <person name="Rudolph-Geiger S."/>
            <person name="Teucke M."/>
            <person name="Lanz C."/>
            <person name="Raddatz G."/>
            <person name="Osoegawa K."/>
            <person name="Zhu B."/>
            <person name="Rapp A."/>
            <person name="Widaa S."/>
            <person name="Langford C."/>
            <person name="Yang F."/>
            <person name="Schuster S.C."/>
            <person name="Carter N.P."/>
            <person name="Harrow J."/>
            <person name="Ning Z."/>
            <person name="Herrero J."/>
            <person name="Searle S.M."/>
            <person name="Enright A."/>
            <person name="Geisler R."/>
            <person name="Plasterk R.H."/>
            <person name="Lee C."/>
            <person name="Westerfield M."/>
            <person name="de Jong P.J."/>
            <person name="Zon L.I."/>
            <person name="Postlethwait J.H."/>
            <person name="Nusslein-Volhard C."/>
            <person name="Hubbard T.J."/>
            <person name="Roest Crollius H."/>
            <person name="Rogers J."/>
            <person name="Stemple D.L."/>
        </authorList>
    </citation>
    <scope>NUCLEOTIDE SEQUENCE [LARGE SCALE GENOMIC DNA]</scope>
    <source>
        <strain>Tuebingen</strain>
    </source>
</reference>
<evidence type="ECO:0000250" key="1"/>
<evidence type="ECO:0000305" key="2"/>
<dbReference type="EMBL" id="CU469534">
    <property type="protein sequence ID" value="CAX13557.1"/>
    <property type="molecule type" value="Genomic_DNA"/>
</dbReference>
<dbReference type="RefSeq" id="NP_001157713.1">
    <property type="nucleotide sequence ID" value="NM_001164241.1"/>
</dbReference>
<dbReference type="SMR" id="B8JLQ0"/>
<dbReference type="FunCoup" id="B8JLQ0">
    <property type="interactions" value="2225"/>
</dbReference>
<dbReference type="STRING" id="7955.ENSDARP00000103510"/>
<dbReference type="PaxDb" id="7955-ENSDARP00000103510"/>
<dbReference type="PeptideAtlas" id="B8JLQ0"/>
<dbReference type="Ensembl" id="ENSDART00000113384">
    <property type="protein sequence ID" value="ENSDARP00000103510"/>
    <property type="gene ID" value="ENSDARG00000078352"/>
</dbReference>
<dbReference type="GeneID" id="100302660"/>
<dbReference type="KEGG" id="dre:100302660"/>
<dbReference type="AGR" id="ZFIN:ZDB-GENE-081104-295"/>
<dbReference type="CTD" id="57128"/>
<dbReference type="ZFIN" id="ZDB-GENE-081104-295">
    <property type="gene designation" value="lyrm4"/>
</dbReference>
<dbReference type="eggNOG" id="KOG3801">
    <property type="taxonomic scope" value="Eukaryota"/>
</dbReference>
<dbReference type="HOGENOM" id="CLU_120076_3_1_1"/>
<dbReference type="InParanoid" id="B8JLQ0"/>
<dbReference type="OMA" id="DAFCENR"/>
<dbReference type="OrthoDB" id="275715at2759"/>
<dbReference type="PhylomeDB" id="B8JLQ0"/>
<dbReference type="TreeFam" id="TF323581"/>
<dbReference type="Reactome" id="R-DRE-1362409">
    <property type="pathway name" value="Mitochondrial iron-sulfur cluster biogenesis"/>
</dbReference>
<dbReference type="UniPathway" id="UPA00266"/>
<dbReference type="PRO" id="PR:B8JLQ0"/>
<dbReference type="Proteomes" id="UP000000437">
    <property type="component" value="Chromosome 2"/>
</dbReference>
<dbReference type="Bgee" id="ENSDARG00000078352">
    <property type="expression patterns" value="Expressed in muscle tissue and 28 other cell types or tissues"/>
</dbReference>
<dbReference type="GO" id="GO:1990221">
    <property type="term" value="C:L-cysteine desulfurase complex"/>
    <property type="evidence" value="ECO:0000318"/>
    <property type="project" value="GO_Central"/>
</dbReference>
<dbReference type="GO" id="GO:0005739">
    <property type="term" value="C:mitochondrion"/>
    <property type="evidence" value="ECO:0000318"/>
    <property type="project" value="GO_Central"/>
</dbReference>
<dbReference type="GO" id="GO:0005634">
    <property type="term" value="C:nucleus"/>
    <property type="evidence" value="ECO:0007669"/>
    <property type="project" value="UniProtKB-SubCell"/>
</dbReference>
<dbReference type="GO" id="GO:0016226">
    <property type="term" value="P:iron-sulfur cluster assembly"/>
    <property type="evidence" value="ECO:0000318"/>
    <property type="project" value="GO_Central"/>
</dbReference>
<dbReference type="CDD" id="cd20264">
    <property type="entry name" value="Complex1_LYR_LYRM4"/>
    <property type="match status" value="1"/>
</dbReference>
<dbReference type="InterPro" id="IPR008011">
    <property type="entry name" value="Complex1_LYR_dom"/>
</dbReference>
<dbReference type="InterPro" id="IPR045297">
    <property type="entry name" value="Complex1_LYR_LYRM4"/>
</dbReference>
<dbReference type="InterPro" id="IPR051522">
    <property type="entry name" value="ISC_assembly_LYR"/>
</dbReference>
<dbReference type="PANTHER" id="PTHR13166:SF7">
    <property type="entry name" value="LYR MOTIF-CONTAINING PROTEIN 4"/>
    <property type="match status" value="1"/>
</dbReference>
<dbReference type="PANTHER" id="PTHR13166">
    <property type="entry name" value="PROTEIN C6ORF149"/>
    <property type="match status" value="1"/>
</dbReference>
<dbReference type="Pfam" id="PF05347">
    <property type="entry name" value="Complex1_LYR"/>
    <property type="match status" value="1"/>
</dbReference>
<protein>
    <recommendedName>
        <fullName>LYR motif-containing protein 4</fullName>
    </recommendedName>
</protein>
<keyword id="KW-0496">Mitochondrion</keyword>
<keyword id="KW-0539">Nucleus</keyword>
<keyword id="KW-1185">Reference proteome</keyword>
<name>LYRM4_DANRE</name>
<sequence>MASCSRAQVISLYRMLMKESKKFPSYNYRTYALRRVKDGFRENLHVDNPRTLDLLINQARENLAVIKRQVSIGHLYSAQRTVVEKEPHL</sequence>
<feature type="chain" id="PRO_0000370332" description="LYR motif-containing protein 4">
    <location>
        <begin position="1"/>
        <end position="89"/>
    </location>
</feature>
<gene>
    <name type="primary">lyrm4</name>
    <name type="synonym">isd11</name>
    <name type="ORF">si:ch73-86n6.2</name>
</gene>
<accession>B8JLQ0</accession>
<proteinExistence type="inferred from homology"/>